<organism>
    <name type="scientific">Prochlorococcus marinus (strain NATL1A)</name>
    <dbReference type="NCBI Taxonomy" id="167555"/>
    <lineage>
        <taxon>Bacteria</taxon>
        <taxon>Bacillati</taxon>
        <taxon>Cyanobacteriota</taxon>
        <taxon>Cyanophyceae</taxon>
        <taxon>Synechococcales</taxon>
        <taxon>Prochlorococcaceae</taxon>
        <taxon>Prochlorococcus</taxon>
    </lineage>
</organism>
<reference key="1">
    <citation type="journal article" date="2007" name="PLoS Genet.">
        <title>Patterns and implications of gene gain and loss in the evolution of Prochlorococcus.</title>
        <authorList>
            <person name="Kettler G.C."/>
            <person name="Martiny A.C."/>
            <person name="Huang K."/>
            <person name="Zucker J."/>
            <person name="Coleman M.L."/>
            <person name="Rodrigue S."/>
            <person name="Chen F."/>
            <person name="Lapidus A."/>
            <person name="Ferriera S."/>
            <person name="Johnson J."/>
            <person name="Steglich C."/>
            <person name="Church G.M."/>
            <person name="Richardson P."/>
            <person name="Chisholm S.W."/>
        </authorList>
    </citation>
    <scope>NUCLEOTIDE SEQUENCE [LARGE SCALE GENOMIC DNA]</scope>
    <source>
        <strain>NATL1A</strain>
    </source>
</reference>
<evidence type="ECO:0000255" key="1">
    <source>
        <dbReference type="HAMAP-Rule" id="MF_01694"/>
    </source>
</evidence>
<evidence type="ECO:0000255" key="2">
    <source>
        <dbReference type="PROSITE-ProRule" id="PRU01266"/>
    </source>
</evidence>
<dbReference type="EC" id="2.8.1.6" evidence="1"/>
<dbReference type="EMBL" id="CP000553">
    <property type="protein sequence ID" value="ABM76044.1"/>
    <property type="molecule type" value="Genomic_DNA"/>
</dbReference>
<dbReference type="RefSeq" id="WP_011824069.1">
    <property type="nucleotide sequence ID" value="NC_008819.1"/>
</dbReference>
<dbReference type="SMR" id="A2C3I4"/>
<dbReference type="KEGG" id="pme:NATL1_14871"/>
<dbReference type="eggNOG" id="COG0502">
    <property type="taxonomic scope" value="Bacteria"/>
</dbReference>
<dbReference type="HOGENOM" id="CLU_033172_1_2_3"/>
<dbReference type="UniPathway" id="UPA00078">
    <property type="reaction ID" value="UER00162"/>
</dbReference>
<dbReference type="Proteomes" id="UP000002592">
    <property type="component" value="Chromosome"/>
</dbReference>
<dbReference type="GO" id="GO:0051537">
    <property type="term" value="F:2 iron, 2 sulfur cluster binding"/>
    <property type="evidence" value="ECO:0007669"/>
    <property type="project" value="UniProtKB-KW"/>
</dbReference>
<dbReference type="GO" id="GO:0051539">
    <property type="term" value="F:4 iron, 4 sulfur cluster binding"/>
    <property type="evidence" value="ECO:0007669"/>
    <property type="project" value="UniProtKB-KW"/>
</dbReference>
<dbReference type="GO" id="GO:0004076">
    <property type="term" value="F:biotin synthase activity"/>
    <property type="evidence" value="ECO:0007669"/>
    <property type="project" value="UniProtKB-UniRule"/>
</dbReference>
<dbReference type="GO" id="GO:0005506">
    <property type="term" value="F:iron ion binding"/>
    <property type="evidence" value="ECO:0007669"/>
    <property type="project" value="UniProtKB-UniRule"/>
</dbReference>
<dbReference type="GO" id="GO:0009102">
    <property type="term" value="P:biotin biosynthetic process"/>
    <property type="evidence" value="ECO:0007669"/>
    <property type="project" value="UniProtKB-UniRule"/>
</dbReference>
<dbReference type="CDD" id="cd01335">
    <property type="entry name" value="Radical_SAM"/>
    <property type="match status" value="1"/>
</dbReference>
<dbReference type="Gene3D" id="3.20.20.70">
    <property type="entry name" value="Aldolase class I"/>
    <property type="match status" value="1"/>
</dbReference>
<dbReference type="HAMAP" id="MF_01694">
    <property type="entry name" value="BioB"/>
    <property type="match status" value="1"/>
</dbReference>
<dbReference type="InterPro" id="IPR013785">
    <property type="entry name" value="Aldolase_TIM"/>
</dbReference>
<dbReference type="InterPro" id="IPR010722">
    <property type="entry name" value="BATS_dom"/>
</dbReference>
<dbReference type="InterPro" id="IPR002684">
    <property type="entry name" value="Biotin_synth/BioAB"/>
</dbReference>
<dbReference type="InterPro" id="IPR024177">
    <property type="entry name" value="Biotin_synthase"/>
</dbReference>
<dbReference type="InterPro" id="IPR006638">
    <property type="entry name" value="Elp3/MiaA/NifB-like_rSAM"/>
</dbReference>
<dbReference type="InterPro" id="IPR007197">
    <property type="entry name" value="rSAM"/>
</dbReference>
<dbReference type="NCBIfam" id="TIGR00433">
    <property type="entry name" value="bioB"/>
    <property type="match status" value="1"/>
</dbReference>
<dbReference type="PANTHER" id="PTHR22976">
    <property type="entry name" value="BIOTIN SYNTHASE"/>
    <property type="match status" value="1"/>
</dbReference>
<dbReference type="PANTHER" id="PTHR22976:SF2">
    <property type="entry name" value="BIOTIN SYNTHASE, MITOCHONDRIAL"/>
    <property type="match status" value="1"/>
</dbReference>
<dbReference type="Pfam" id="PF06968">
    <property type="entry name" value="BATS"/>
    <property type="match status" value="1"/>
</dbReference>
<dbReference type="Pfam" id="PF04055">
    <property type="entry name" value="Radical_SAM"/>
    <property type="match status" value="1"/>
</dbReference>
<dbReference type="PIRSF" id="PIRSF001619">
    <property type="entry name" value="Biotin_synth"/>
    <property type="match status" value="1"/>
</dbReference>
<dbReference type="SFLD" id="SFLDF00272">
    <property type="entry name" value="biotin_synthase"/>
    <property type="match status" value="1"/>
</dbReference>
<dbReference type="SFLD" id="SFLDG01278">
    <property type="entry name" value="biotin_synthase_like"/>
    <property type="match status" value="1"/>
</dbReference>
<dbReference type="SMART" id="SM00876">
    <property type="entry name" value="BATS"/>
    <property type="match status" value="1"/>
</dbReference>
<dbReference type="SMART" id="SM00729">
    <property type="entry name" value="Elp3"/>
    <property type="match status" value="1"/>
</dbReference>
<dbReference type="SUPFAM" id="SSF102114">
    <property type="entry name" value="Radical SAM enzymes"/>
    <property type="match status" value="1"/>
</dbReference>
<dbReference type="PROSITE" id="PS51918">
    <property type="entry name" value="RADICAL_SAM"/>
    <property type="match status" value="1"/>
</dbReference>
<proteinExistence type="inferred from homology"/>
<comment type="function">
    <text evidence="1">Catalyzes the conversion of dethiobiotin (DTB) to biotin by the insertion of a sulfur atom into dethiobiotin via a radical-based mechanism.</text>
</comment>
<comment type="catalytic activity">
    <reaction evidence="1">
        <text>(4R,5S)-dethiobiotin + (sulfur carrier)-SH + 2 reduced [2Fe-2S]-[ferredoxin] + 2 S-adenosyl-L-methionine = (sulfur carrier)-H + biotin + 2 5'-deoxyadenosine + 2 L-methionine + 2 oxidized [2Fe-2S]-[ferredoxin]</text>
        <dbReference type="Rhea" id="RHEA:22060"/>
        <dbReference type="Rhea" id="RHEA-COMP:10000"/>
        <dbReference type="Rhea" id="RHEA-COMP:10001"/>
        <dbReference type="Rhea" id="RHEA-COMP:14737"/>
        <dbReference type="Rhea" id="RHEA-COMP:14739"/>
        <dbReference type="ChEBI" id="CHEBI:17319"/>
        <dbReference type="ChEBI" id="CHEBI:29917"/>
        <dbReference type="ChEBI" id="CHEBI:33737"/>
        <dbReference type="ChEBI" id="CHEBI:33738"/>
        <dbReference type="ChEBI" id="CHEBI:57586"/>
        <dbReference type="ChEBI" id="CHEBI:57844"/>
        <dbReference type="ChEBI" id="CHEBI:59789"/>
        <dbReference type="ChEBI" id="CHEBI:64428"/>
        <dbReference type="ChEBI" id="CHEBI:149473"/>
        <dbReference type="EC" id="2.8.1.6"/>
    </reaction>
</comment>
<comment type="cofactor">
    <cofactor evidence="1">
        <name>[4Fe-4S] cluster</name>
        <dbReference type="ChEBI" id="CHEBI:49883"/>
    </cofactor>
    <text evidence="1">Binds 1 [4Fe-4S] cluster. The cluster is coordinated with 3 cysteines and an exchangeable S-adenosyl-L-methionine.</text>
</comment>
<comment type="cofactor">
    <cofactor evidence="1">
        <name>[2Fe-2S] cluster</name>
        <dbReference type="ChEBI" id="CHEBI:190135"/>
    </cofactor>
    <text evidence="1">Binds 1 [2Fe-2S] cluster. The cluster is coordinated with 3 cysteines and 1 arginine.</text>
</comment>
<comment type="pathway">
    <text evidence="1">Cofactor biosynthesis; biotin biosynthesis; biotin from 7,8-diaminononanoate: step 2/2.</text>
</comment>
<comment type="subunit">
    <text evidence="1">Homodimer.</text>
</comment>
<comment type="similarity">
    <text evidence="1">Belongs to the radical SAM superfamily. Biotin synthase family.</text>
</comment>
<name>BIOB_PROM1</name>
<feature type="chain" id="PRO_0000381537" description="Biotin synthase">
    <location>
        <begin position="1"/>
        <end position="345"/>
    </location>
</feature>
<feature type="domain" description="Radical SAM core" evidence="2">
    <location>
        <begin position="67"/>
        <end position="295"/>
    </location>
</feature>
<feature type="binding site" evidence="1">
    <location>
        <position position="82"/>
    </location>
    <ligand>
        <name>[4Fe-4S] cluster</name>
        <dbReference type="ChEBI" id="CHEBI:49883"/>
        <note>4Fe-4S-S-AdoMet</note>
    </ligand>
</feature>
<feature type="binding site" evidence="1">
    <location>
        <position position="86"/>
    </location>
    <ligand>
        <name>[4Fe-4S] cluster</name>
        <dbReference type="ChEBI" id="CHEBI:49883"/>
        <note>4Fe-4S-S-AdoMet</note>
    </ligand>
</feature>
<feature type="binding site" evidence="1">
    <location>
        <position position="89"/>
    </location>
    <ligand>
        <name>[4Fe-4S] cluster</name>
        <dbReference type="ChEBI" id="CHEBI:49883"/>
        <note>4Fe-4S-S-AdoMet</note>
    </ligand>
</feature>
<feature type="binding site" evidence="1">
    <location>
        <position position="126"/>
    </location>
    <ligand>
        <name>[2Fe-2S] cluster</name>
        <dbReference type="ChEBI" id="CHEBI:190135"/>
    </ligand>
</feature>
<feature type="binding site" evidence="1">
    <location>
        <position position="158"/>
    </location>
    <ligand>
        <name>[2Fe-2S] cluster</name>
        <dbReference type="ChEBI" id="CHEBI:190135"/>
    </ligand>
</feature>
<feature type="binding site" evidence="1">
    <location>
        <position position="218"/>
    </location>
    <ligand>
        <name>[2Fe-2S] cluster</name>
        <dbReference type="ChEBI" id="CHEBI:190135"/>
    </ligand>
</feature>
<feature type="binding site" evidence="1">
    <location>
        <position position="290"/>
    </location>
    <ligand>
        <name>[2Fe-2S] cluster</name>
        <dbReference type="ChEBI" id="CHEBI:190135"/>
    </ligand>
</feature>
<sequence length="345" mass="37938">MTLINPNIQESNKLKFKDESYLDFNSINGGDIRHDWSSEEIKEILDLPLMDLLWRAQIVHRSYNPGYKVQLASLLSVKTGGCSEDCAYCPQSVHNETTVQPNPVIEVESVLDRARAAKDAGADRFCMGWAWREIKDGNAFDSMLEMVRGVRELGLEACVTAGMITDSQASRLAEAGLTAYNHNLDTSPEHYSKIISTRTYQDRLETLRRVRMAGITVCCGGIIGMGESVSDRASLLKVLATLDPHPESVPINALVAVEGTPMEDLSSIDPLEMVRMVATARVIMPKSRIRLSAGRQQLGREAQILCLQSGADSIFYGDTLLTTSNPEVEADRKLLADAGITANFS</sequence>
<protein>
    <recommendedName>
        <fullName evidence="1">Biotin synthase</fullName>
        <ecNumber evidence="1">2.8.1.6</ecNumber>
    </recommendedName>
</protein>
<accession>A2C3I4</accession>
<gene>
    <name evidence="1" type="primary">bioB</name>
    <name type="ordered locus">NATL1_14871</name>
</gene>
<keyword id="KW-0001">2Fe-2S</keyword>
<keyword id="KW-0004">4Fe-4S</keyword>
<keyword id="KW-0093">Biotin biosynthesis</keyword>
<keyword id="KW-0408">Iron</keyword>
<keyword id="KW-0411">Iron-sulfur</keyword>
<keyword id="KW-0479">Metal-binding</keyword>
<keyword id="KW-0949">S-adenosyl-L-methionine</keyword>
<keyword id="KW-0808">Transferase</keyword>